<dbReference type="SMR" id="P83416"/>
<dbReference type="GO" id="GO:0005576">
    <property type="term" value="C:extracellular region"/>
    <property type="evidence" value="ECO:0007669"/>
    <property type="project" value="UniProtKB-SubCell"/>
</dbReference>
<dbReference type="GO" id="GO:0042742">
    <property type="term" value="P:defense response to bacterium"/>
    <property type="evidence" value="ECO:0007669"/>
    <property type="project" value="UniProtKB-KW"/>
</dbReference>
<dbReference type="GO" id="GO:0045087">
    <property type="term" value="P:innate immune response"/>
    <property type="evidence" value="ECO:0007669"/>
    <property type="project" value="UniProtKB-KW"/>
</dbReference>
<dbReference type="Gene3D" id="1.20.5.750">
    <property type="entry name" value="Moricin domain"/>
    <property type="match status" value="1"/>
</dbReference>
<dbReference type="InterPro" id="IPR009456">
    <property type="entry name" value="Moricin_fam"/>
</dbReference>
<dbReference type="InterPro" id="IPR037043">
    <property type="entry name" value="Moricin_sf"/>
</dbReference>
<dbReference type="Pfam" id="PF06451">
    <property type="entry name" value="Moricin"/>
    <property type="match status" value="1"/>
</dbReference>
<accession>P83416</accession>
<protein>
    <recommendedName>
        <fullName>Virescein</fullName>
    </recommendedName>
</protein>
<proteinExistence type="evidence at protein level"/>
<sequence>GKIPIGAIKKAGKAIGKGLRAVNIASTAHDVYTFFKPKKRH</sequence>
<name>VIRE_HELVI</name>
<feature type="chain" id="PRO_0000127114" description="Virescein">
    <location>
        <begin position="1"/>
        <end position="41"/>
    </location>
</feature>
<feature type="modified residue" description="Histidine amide" evidence="1">
    <location>
        <position position="41"/>
    </location>
</feature>
<comment type="function">
    <text evidence="2 3">Has antibacterial activity against Gram-positive and Gram-negative bacteria.</text>
</comment>
<comment type="subunit">
    <text evidence="2 3">Monomer.</text>
</comment>
<comment type="subcellular location">
    <subcellularLocation>
        <location evidence="2 3">Secreted</location>
    </subcellularLocation>
</comment>
<comment type="tissue specificity">
    <text evidence="2 3">Hemolymph.</text>
</comment>
<comment type="induction">
    <text evidence="2 3">By bacterial infection.</text>
</comment>
<comment type="mass spectrometry"/>
<comment type="similarity">
    <text evidence="3">Belongs to the moricin family.</text>
</comment>
<reference evidence="3" key="1">
    <citation type="submission" date="2002-07" db="UniProtKB">
        <authorList>
            <person name="Bulet P."/>
            <person name="Lamberty M."/>
            <person name="Brookhart G."/>
            <person name="Bushey D."/>
        </authorList>
    </citation>
    <scope>PROTEIN SEQUENCE</scope>
    <scope>FUNCTION</scope>
    <scope>SUBUNIT</scope>
    <scope>SUBCELLULAR LOCATION</scope>
    <scope>TISSUE SPECIFICITY</scope>
    <scope>INDUCTION</scope>
    <scope>MASS SPECTROMETRY</scope>
    <source>
        <tissue>Hemolymph</tissue>
    </source>
</reference>
<evidence type="ECO:0000255" key="1"/>
<evidence type="ECO:0000269" key="2">
    <source ref="1"/>
</evidence>
<evidence type="ECO:0000305" key="3"/>
<keyword id="KW-0027">Amidation</keyword>
<keyword id="KW-0044">Antibiotic</keyword>
<keyword id="KW-0929">Antimicrobial</keyword>
<keyword id="KW-0903">Direct protein sequencing</keyword>
<keyword id="KW-0391">Immunity</keyword>
<keyword id="KW-0399">Innate immunity</keyword>
<keyword id="KW-0964">Secreted</keyword>
<organism evidence="3">
    <name type="scientific">Heliothis virescens</name>
    <name type="common">Tobacco budworm moth</name>
    <dbReference type="NCBI Taxonomy" id="7102"/>
    <lineage>
        <taxon>Eukaryota</taxon>
        <taxon>Metazoa</taxon>
        <taxon>Ecdysozoa</taxon>
        <taxon>Arthropoda</taxon>
        <taxon>Hexapoda</taxon>
        <taxon>Insecta</taxon>
        <taxon>Pterygota</taxon>
        <taxon>Neoptera</taxon>
        <taxon>Endopterygota</taxon>
        <taxon>Lepidoptera</taxon>
        <taxon>Glossata</taxon>
        <taxon>Ditrysia</taxon>
        <taxon>Noctuoidea</taxon>
        <taxon>Noctuidae</taxon>
        <taxon>Heliothinae</taxon>
        <taxon>Heliothis</taxon>
    </lineage>
</organism>